<sequence>MAMTDTEFHQLADDMFQAIETAIETAIDEQDADVDIDASGNVLQLEFVDGSKIVINKQEPLHEIWVATRFGGYHFGFVDGKWIDGRNGGEFMPFVQDSILRQSGIALSF</sequence>
<proteinExistence type="inferred from homology"/>
<keyword id="KW-0408">Iron</keyword>
<keyword id="KW-0479">Metal-binding</keyword>
<evidence type="ECO:0000255" key="1">
    <source>
        <dbReference type="HAMAP-Rule" id="MF_00142"/>
    </source>
</evidence>
<protein>
    <recommendedName>
        <fullName evidence="1">Iron-sulfur cluster assembly protein CyaY</fullName>
    </recommendedName>
</protein>
<feature type="chain" id="PRO_1000010958" description="Iron-sulfur cluster assembly protein CyaY">
    <location>
        <begin position="1"/>
        <end position="109"/>
    </location>
</feature>
<dbReference type="EMBL" id="CP000444">
    <property type="protein sequence ID" value="ABI44616.1"/>
    <property type="molecule type" value="Genomic_DNA"/>
</dbReference>
<dbReference type="SMR" id="Q0HQI9"/>
<dbReference type="KEGG" id="shm:Shewmr7_3636"/>
<dbReference type="HOGENOM" id="CLU_080880_3_0_6"/>
<dbReference type="GO" id="GO:0005829">
    <property type="term" value="C:cytosol"/>
    <property type="evidence" value="ECO:0007669"/>
    <property type="project" value="TreeGrafter"/>
</dbReference>
<dbReference type="GO" id="GO:0008199">
    <property type="term" value="F:ferric iron binding"/>
    <property type="evidence" value="ECO:0007669"/>
    <property type="project" value="InterPro"/>
</dbReference>
<dbReference type="GO" id="GO:0008198">
    <property type="term" value="F:ferrous iron binding"/>
    <property type="evidence" value="ECO:0007669"/>
    <property type="project" value="TreeGrafter"/>
</dbReference>
<dbReference type="GO" id="GO:0016226">
    <property type="term" value="P:iron-sulfur cluster assembly"/>
    <property type="evidence" value="ECO:0007669"/>
    <property type="project" value="UniProtKB-UniRule"/>
</dbReference>
<dbReference type="CDD" id="cd00503">
    <property type="entry name" value="Frataxin"/>
    <property type="match status" value="1"/>
</dbReference>
<dbReference type="FunFam" id="3.30.920.10:FF:000005">
    <property type="entry name" value="Iron-sulfur cluster assembly protein CyaY"/>
    <property type="match status" value="1"/>
</dbReference>
<dbReference type="Gene3D" id="3.30.920.10">
    <property type="entry name" value="Frataxin/CyaY"/>
    <property type="match status" value="1"/>
</dbReference>
<dbReference type="HAMAP" id="MF_00142">
    <property type="entry name" value="CyaY"/>
    <property type="match status" value="1"/>
</dbReference>
<dbReference type="InterPro" id="IPR047584">
    <property type="entry name" value="CyaY"/>
</dbReference>
<dbReference type="InterPro" id="IPR002908">
    <property type="entry name" value="Frataxin/CyaY"/>
</dbReference>
<dbReference type="InterPro" id="IPR036524">
    <property type="entry name" value="Frataxin/CyaY_sf"/>
</dbReference>
<dbReference type="InterPro" id="IPR020895">
    <property type="entry name" value="Frataxin_CS"/>
</dbReference>
<dbReference type="NCBIfam" id="TIGR03421">
    <property type="entry name" value="FeS_CyaY"/>
    <property type="match status" value="1"/>
</dbReference>
<dbReference type="PANTHER" id="PTHR16821">
    <property type="entry name" value="FRATAXIN"/>
    <property type="match status" value="1"/>
</dbReference>
<dbReference type="PANTHER" id="PTHR16821:SF2">
    <property type="entry name" value="FRATAXIN, MITOCHONDRIAL"/>
    <property type="match status" value="1"/>
</dbReference>
<dbReference type="Pfam" id="PF01491">
    <property type="entry name" value="Frataxin_Cyay"/>
    <property type="match status" value="1"/>
</dbReference>
<dbReference type="SMART" id="SM01219">
    <property type="entry name" value="Frataxin_Cyay"/>
    <property type="match status" value="1"/>
</dbReference>
<dbReference type="SUPFAM" id="SSF55387">
    <property type="entry name" value="Frataxin/Nqo15-like"/>
    <property type="match status" value="1"/>
</dbReference>
<dbReference type="PROSITE" id="PS01344">
    <property type="entry name" value="FRATAXIN_1"/>
    <property type="match status" value="1"/>
</dbReference>
<dbReference type="PROSITE" id="PS50810">
    <property type="entry name" value="FRATAXIN_2"/>
    <property type="match status" value="1"/>
</dbReference>
<accession>Q0HQI9</accession>
<reference key="1">
    <citation type="submission" date="2006-08" db="EMBL/GenBank/DDBJ databases">
        <title>Complete sequence of chromosome 1 of Shewanella sp. MR-7.</title>
        <authorList>
            <person name="Copeland A."/>
            <person name="Lucas S."/>
            <person name="Lapidus A."/>
            <person name="Barry K."/>
            <person name="Detter J.C."/>
            <person name="Glavina del Rio T."/>
            <person name="Hammon N."/>
            <person name="Israni S."/>
            <person name="Dalin E."/>
            <person name="Tice H."/>
            <person name="Pitluck S."/>
            <person name="Kiss H."/>
            <person name="Brettin T."/>
            <person name="Bruce D."/>
            <person name="Han C."/>
            <person name="Tapia R."/>
            <person name="Gilna P."/>
            <person name="Schmutz J."/>
            <person name="Larimer F."/>
            <person name="Land M."/>
            <person name="Hauser L."/>
            <person name="Kyrpides N."/>
            <person name="Mikhailova N."/>
            <person name="Nealson K."/>
            <person name="Konstantinidis K."/>
            <person name="Klappenbach J."/>
            <person name="Tiedje J."/>
            <person name="Richardson P."/>
        </authorList>
    </citation>
    <scope>NUCLEOTIDE SEQUENCE [LARGE SCALE GENOMIC DNA]</scope>
    <source>
        <strain>MR-7</strain>
    </source>
</reference>
<organism>
    <name type="scientific">Shewanella sp. (strain MR-7)</name>
    <dbReference type="NCBI Taxonomy" id="60481"/>
    <lineage>
        <taxon>Bacteria</taxon>
        <taxon>Pseudomonadati</taxon>
        <taxon>Pseudomonadota</taxon>
        <taxon>Gammaproteobacteria</taxon>
        <taxon>Alteromonadales</taxon>
        <taxon>Shewanellaceae</taxon>
        <taxon>Shewanella</taxon>
    </lineage>
</organism>
<comment type="function">
    <text evidence="1">Involved in iron-sulfur (Fe-S) cluster assembly. May act as a regulator of Fe-S biogenesis.</text>
</comment>
<comment type="similarity">
    <text evidence="1">Belongs to the frataxin family.</text>
</comment>
<name>CYAY_SHESR</name>
<gene>
    <name evidence="1" type="primary">cyaY</name>
    <name type="ordered locus">Shewmr7_3636</name>
</gene>